<accession>Q6G547</accession>
<proteinExistence type="inferred from homology"/>
<keyword id="KW-0413">Isomerase</keyword>
<keyword id="KW-0819">tRNA processing</keyword>
<name>TRUA_BARHE</name>
<feature type="chain" id="PRO_0000057336" description="tRNA pseudouridine synthase A">
    <location>
        <begin position="1"/>
        <end position="247"/>
    </location>
</feature>
<feature type="active site" description="Nucleophile" evidence="1">
    <location>
        <position position="52"/>
    </location>
</feature>
<feature type="binding site" evidence="1">
    <location>
        <position position="113"/>
    </location>
    <ligand>
        <name>substrate</name>
    </ligand>
</feature>
<organism>
    <name type="scientific">Bartonella henselae (strain ATCC 49882 / DSM 28221 / CCUG 30454 / Houston 1)</name>
    <name type="common">Rochalimaea henselae</name>
    <dbReference type="NCBI Taxonomy" id="283166"/>
    <lineage>
        <taxon>Bacteria</taxon>
        <taxon>Pseudomonadati</taxon>
        <taxon>Pseudomonadota</taxon>
        <taxon>Alphaproteobacteria</taxon>
        <taxon>Hyphomicrobiales</taxon>
        <taxon>Bartonellaceae</taxon>
        <taxon>Bartonella</taxon>
    </lineage>
</organism>
<dbReference type="EC" id="5.4.99.12" evidence="1"/>
<dbReference type="EMBL" id="BX897699">
    <property type="protein sequence ID" value="CAF26890.1"/>
    <property type="molecule type" value="Genomic_DNA"/>
</dbReference>
<dbReference type="RefSeq" id="WP_011180035.1">
    <property type="nucleotide sequence ID" value="NZ_LRIJ02000001.1"/>
</dbReference>
<dbReference type="SMR" id="Q6G547"/>
<dbReference type="PaxDb" id="283166-BH00740"/>
<dbReference type="EnsemblBacteria" id="CAF26890">
    <property type="protein sequence ID" value="CAF26890"/>
    <property type="gene ID" value="BH00740"/>
</dbReference>
<dbReference type="GeneID" id="92986360"/>
<dbReference type="KEGG" id="bhe:BH00740"/>
<dbReference type="eggNOG" id="COG0101">
    <property type="taxonomic scope" value="Bacteria"/>
</dbReference>
<dbReference type="OrthoDB" id="9811823at2"/>
<dbReference type="Proteomes" id="UP000000421">
    <property type="component" value="Chromosome"/>
</dbReference>
<dbReference type="GO" id="GO:0003723">
    <property type="term" value="F:RNA binding"/>
    <property type="evidence" value="ECO:0007669"/>
    <property type="project" value="InterPro"/>
</dbReference>
<dbReference type="GO" id="GO:0160147">
    <property type="term" value="F:tRNA pseudouridine(38-40) synthase activity"/>
    <property type="evidence" value="ECO:0007669"/>
    <property type="project" value="UniProtKB-EC"/>
</dbReference>
<dbReference type="GO" id="GO:0031119">
    <property type="term" value="P:tRNA pseudouridine synthesis"/>
    <property type="evidence" value="ECO:0007669"/>
    <property type="project" value="UniProtKB-UniRule"/>
</dbReference>
<dbReference type="CDD" id="cd02570">
    <property type="entry name" value="PseudoU_synth_EcTruA"/>
    <property type="match status" value="1"/>
</dbReference>
<dbReference type="FunFam" id="3.30.70.580:FF:000001">
    <property type="entry name" value="tRNA pseudouridine synthase A"/>
    <property type="match status" value="1"/>
</dbReference>
<dbReference type="Gene3D" id="3.30.70.660">
    <property type="entry name" value="Pseudouridine synthase I, catalytic domain, C-terminal subdomain"/>
    <property type="match status" value="1"/>
</dbReference>
<dbReference type="Gene3D" id="3.30.70.580">
    <property type="entry name" value="Pseudouridine synthase I, catalytic domain, N-terminal subdomain"/>
    <property type="match status" value="1"/>
</dbReference>
<dbReference type="HAMAP" id="MF_00171">
    <property type="entry name" value="TruA"/>
    <property type="match status" value="1"/>
</dbReference>
<dbReference type="InterPro" id="IPR020103">
    <property type="entry name" value="PsdUridine_synth_cat_dom_sf"/>
</dbReference>
<dbReference type="InterPro" id="IPR001406">
    <property type="entry name" value="PsdUridine_synth_TruA"/>
</dbReference>
<dbReference type="InterPro" id="IPR020097">
    <property type="entry name" value="PsdUridine_synth_TruA_a/b_dom"/>
</dbReference>
<dbReference type="InterPro" id="IPR020095">
    <property type="entry name" value="PsdUridine_synth_TruA_C"/>
</dbReference>
<dbReference type="InterPro" id="IPR020094">
    <property type="entry name" value="TruA/RsuA/RluB/E/F_N"/>
</dbReference>
<dbReference type="NCBIfam" id="TIGR00071">
    <property type="entry name" value="hisT_truA"/>
    <property type="match status" value="1"/>
</dbReference>
<dbReference type="PANTHER" id="PTHR11142">
    <property type="entry name" value="PSEUDOURIDYLATE SYNTHASE"/>
    <property type="match status" value="1"/>
</dbReference>
<dbReference type="PANTHER" id="PTHR11142:SF0">
    <property type="entry name" value="TRNA PSEUDOURIDINE SYNTHASE-LIKE 1"/>
    <property type="match status" value="1"/>
</dbReference>
<dbReference type="Pfam" id="PF01416">
    <property type="entry name" value="PseudoU_synth_1"/>
    <property type="match status" value="2"/>
</dbReference>
<dbReference type="PIRSF" id="PIRSF001430">
    <property type="entry name" value="tRNA_psdUrid_synth"/>
    <property type="match status" value="1"/>
</dbReference>
<dbReference type="SUPFAM" id="SSF55120">
    <property type="entry name" value="Pseudouridine synthase"/>
    <property type="match status" value="1"/>
</dbReference>
<sequence length="247" mass="28169">MPRFKLTLEYDGSNYAGWQRQAELRTIQSALEQALFHFSGQQLTITTAGRTDAGVHATGQVAHVDFEKNWRTHTVRDALNAHLQKQGDNIAILHVQNVPDSFDARFSAIKRHYLFKILNRRSPPALNTKRVWWIPKPLNAQAMHEAAQKLVGKHDFTTFRSAHCQAKSPIRTLERLDVQREGEEIFLYAQARSFLHHQIRSFAGSLMEVGIGRWTTQDLEAALHAKDRTRCGMVAPPSGLYLTKVEY</sequence>
<reference key="1">
    <citation type="journal article" date="2004" name="Proc. Natl. Acad. Sci. U.S.A.">
        <title>The louse-borne human pathogen Bartonella quintana is a genomic derivative of the zoonotic agent Bartonella henselae.</title>
        <authorList>
            <person name="Alsmark U.C.M."/>
            <person name="Frank A.C."/>
            <person name="Karlberg E.O."/>
            <person name="Legault B.-A."/>
            <person name="Ardell D.H."/>
            <person name="Canbaeck B."/>
            <person name="Eriksson A.-S."/>
            <person name="Naeslund A.K."/>
            <person name="Handley S.A."/>
            <person name="Huvet M."/>
            <person name="La Scola B."/>
            <person name="Holmberg M."/>
            <person name="Andersson S.G.E."/>
        </authorList>
    </citation>
    <scope>NUCLEOTIDE SEQUENCE [LARGE SCALE GENOMIC DNA]</scope>
    <source>
        <strain>ATCC 49882 / DSM 28221 / CCUG 30454 / Houston 1</strain>
    </source>
</reference>
<gene>
    <name evidence="1" type="primary">truA</name>
    <name type="ordered locus">BH00740</name>
</gene>
<evidence type="ECO:0000255" key="1">
    <source>
        <dbReference type="HAMAP-Rule" id="MF_00171"/>
    </source>
</evidence>
<protein>
    <recommendedName>
        <fullName evidence="1">tRNA pseudouridine synthase A</fullName>
        <ecNumber evidence="1">5.4.99.12</ecNumber>
    </recommendedName>
    <alternativeName>
        <fullName evidence="1">tRNA pseudouridine(38-40) synthase</fullName>
    </alternativeName>
    <alternativeName>
        <fullName evidence="1">tRNA pseudouridylate synthase I</fullName>
    </alternativeName>
    <alternativeName>
        <fullName evidence="1">tRNA-uridine isomerase I</fullName>
    </alternativeName>
</protein>
<comment type="function">
    <text evidence="1">Formation of pseudouridine at positions 38, 39 and 40 in the anticodon stem and loop of transfer RNAs.</text>
</comment>
<comment type="catalytic activity">
    <reaction evidence="1">
        <text>uridine(38/39/40) in tRNA = pseudouridine(38/39/40) in tRNA</text>
        <dbReference type="Rhea" id="RHEA:22376"/>
        <dbReference type="Rhea" id="RHEA-COMP:10085"/>
        <dbReference type="Rhea" id="RHEA-COMP:10087"/>
        <dbReference type="ChEBI" id="CHEBI:65314"/>
        <dbReference type="ChEBI" id="CHEBI:65315"/>
        <dbReference type="EC" id="5.4.99.12"/>
    </reaction>
</comment>
<comment type="subunit">
    <text evidence="1">Homodimer.</text>
</comment>
<comment type="similarity">
    <text evidence="1">Belongs to the tRNA pseudouridine synthase TruA family.</text>
</comment>